<accession>P11853</accession>
<accession>B3SRS3</accession>
<accession>Q761X9</accession>
<comment type="function">
    <text evidence="2">Calcium-binding protein that interacts with rotavirus cell receptors once the initial attachment by VP4 has been achieved. Rotavirus attachment and entry into the host cell probably involves multiple sequential contacts between the outer capsid proteins VP4 and VP7, and the cell receptors. Following entry into the host cell, low intracellular or intravesicular Ca(2+) concentration probably causes the calcium-stabilized VP7 trimers to dissociate from the virion. This step is probably necessary for the membrane-disrupting entry step and the release of VP4, which is locked onto the virion by VP7.</text>
</comment>
<comment type="subunit">
    <text evidence="2">Homotrimer; disulfide-linked. 2 Ca(2+) ions bound at each subunit interface in the trimer hold the trimer together. Interacts with the intermediate capsid protein VP6. Interacts with the outer capsid protein VP5*.</text>
</comment>
<comment type="subcellular location">
    <subcellularLocation>
        <location evidence="2">Virion</location>
    </subcellularLocation>
    <subcellularLocation>
        <location evidence="2">Host endoplasmic reticulum lumen</location>
    </subcellularLocation>
    <text evidence="2">The outer layer contains 780 copies of VP7, grouped as 260 trimers. Immature double-layered particles assembled in the cytoplasm bud across the membrane of the endoplasmic reticulum, acquiring during this process a transient lipid membrane that is modified with the ER resident viral glycoproteins NSP4 and VP7; these enveloped particles also contain VP4. As the particles move towards the interior of the ER cisternae, the transient lipid membrane and the non-structural protein NSP4 are lost, while the virus surface proteins VP4 and VP7 rearrange to form the outermost virus protein layer, yielding mature infectious triple-layered particles.</text>
</comment>
<comment type="alternative products">
    <event type="alternative initiation"/>
    <isoform>
        <id>P11853-1</id>
        <name>1</name>
        <sequence type="displayed"/>
    </isoform>
    <isoform>
        <id>P11853-2</id>
        <name>2</name>
        <sequence type="described" ref="VSP_038628"/>
    </isoform>
</comment>
<comment type="PTM">
    <text evidence="2">N-glycosylated.</text>
</comment>
<comment type="PTM">
    <text evidence="2">The N-terminus is blocked possibly by pyroglutamic acid.</text>
</comment>
<comment type="miscellaneous">
    <text evidence="2">Some rotavirus strains are neuraminidase-sensitive and require sialic acid to attach to the cell surface. Some rotavirus strains are integrin-dependent. Some rotavirus strains depend on ganglioside for their entry into the host cell. Hsp70 also seems to be involved in the entry of some strains.</text>
</comment>
<comment type="miscellaneous">
    <text evidence="2">In group A rotaviruses, VP7 defines the G serotype.</text>
</comment>
<comment type="miscellaneous">
    <molecule>Isoform 2</molecule>
    <text evidence="3">Produced by alternative initiation at Met-30 of isoform 1.</text>
</comment>
<comment type="similarity">
    <text evidence="2">Belongs to the rotavirus VP7 family.</text>
</comment>
<keyword id="KW-0024">Alternative initiation</keyword>
<keyword id="KW-0106">Calcium</keyword>
<keyword id="KW-0167">Capsid protein</keyword>
<keyword id="KW-1015">Disulfide bond</keyword>
<keyword id="KW-0325">Glycoprotein</keyword>
<keyword id="KW-1038">Host endoplasmic reticulum</keyword>
<keyword id="KW-0945">Host-virus interaction</keyword>
<keyword id="KW-0479">Metal-binding</keyword>
<keyword id="KW-1152">Outer capsid protein</keyword>
<keyword id="KW-1185">Reference proteome</keyword>
<keyword id="KW-0732">Signal</keyword>
<keyword id="KW-1146">T=13 icosahedral capsid protein</keyword>
<keyword id="KW-0946">Virion</keyword>
<evidence type="ECO:0000255" key="1"/>
<evidence type="ECO:0000255" key="2">
    <source>
        <dbReference type="HAMAP-Rule" id="MF_04131"/>
    </source>
</evidence>
<evidence type="ECO:0000305" key="3"/>
<reference key="1">
    <citation type="journal article" date="1987" name="Virology">
        <title>Comparison of the amino acid sequences of the major neutralization protein of four human rotavirus serotypes.</title>
        <authorList>
            <person name="Green K.Y."/>
            <person name="Midthun K."/>
            <person name="Gorziglia M."/>
            <person name="Hoshino Y."/>
            <person name="Kapikian A.Z."/>
            <person name="Chanock R.M."/>
            <person name="Flores J."/>
        </authorList>
    </citation>
    <scope>NUCLEOTIDE SEQUENCE</scope>
</reference>
<reference key="2">
    <citation type="submission" date="2003-08" db="EMBL/GenBank/DDBJ databases">
        <title>VP7 sequences in human rotavirus strains.</title>
        <authorList>
            <person name="Homma S."/>
            <person name="Hoshino Y."/>
        </authorList>
    </citation>
    <scope>NUCLEOTIDE SEQUENCE [GENOMIC RNA]</scope>
</reference>
<reference key="3">
    <citation type="journal article" date="2008" name="J. Virol.">
        <title>Group A human rotavirus genomics: evidence that gene constellations are influenced by viral protein interactions.</title>
        <authorList>
            <person name="Heiman E.M."/>
            <person name="McDonald S.M."/>
            <person name="Barro M."/>
            <person name="Taraporewala Z.F."/>
            <person name="Bar-Magen T."/>
            <person name="Patton J.T."/>
        </authorList>
    </citation>
    <scope>NUCLEOTIDE SEQUENCE [GENOMIC RNA]</scope>
</reference>
<feature type="signal peptide" evidence="2">
    <location>
        <begin position="1"/>
        <end position="50"/>
    </location>
</feature>
<feature type="chain" id="PRO_0000149601" description="Outer capsid glycoprotein VP7" evidence="2">
    <location>
        <begin position="51"/>
        <end position="326"/>
    </location>
</feature>
<feature type="region of interest" description="CNP motif; interaction with ITGAV/ITGB3" evidence="2">
    <location>
        <begin position="165"/>
        <end position="167"/>
    </location>
</feature>
<feature type="region of interest" description="GPR motif; interaction with ITGAX/ITGB2" evidence="2">
    <location>
        <begin position="253"/>
        <end position="255"/>
    </location>
</feature>
<feature type="binding site" evidence="2">
    <location>
        <position position="95"/>
    </location>
    <ligand>
        <name>Ca(2+)</name>
        <dbReference type="ChEBI" id="CHEBI:29108"/>
        <label>1</label>
    </ligand>
</feature>
<feature type="binding site" evidence="2">
    <location>
        <position position="177"/>
    </location>
    <ligand>
        <name>Ca(2+)</name>
        <dbReference type="ChEBI" id="CHEBI:29108"/>
        <label>2</label>
    </ligand>
</feature>
<feature type="binding site" evidence="2">
    <location>
        <position position="206"/>
    </location>
    <ligand>
        <name>Ca(2+)</name>
        <dbReference type="ChEBI" id="CHEBI:29108"/>
        <label>1</label>
    </ligand>
</feature>
<feature type="binding site" evidence="2">
    <location>
        <position position="214"/>
    </location>
    <ligand>
        <name>Ca(2+)</name>
        <dbReference type="ChEBI" id="CHEBI:29108"/>
        <label>1</label>
    </ligand>
</feature>
<feature type="binding site" evidence="2">
    <location>
        <position position="216"/>
    </location>
    <ligand>
        <name>Ca(2+)</name>
        <dbReference type="ChEBI" id="CHEBI:29108"/>
        <label>1</label>
    </ligand>
</feature>
<feature type="binding site" evidence="2">
    <location>
        <position position="228"/>
    </location>
    <ligand>
        <name>Ca(2+)</name>
        <dbReference type="ChEBI" id="CHEBI:29108"/>
        <label>2</label>
    </ligand>
</feature>
<feature type="binding site" evidence="2">
    <location>
        <position position="229"/>
    </location>
    <ligand>
        <name>Ca(2+)</name>
        <dbReference type="ChEBI" id="CHEBI:29108"/>
        <label>2</label>
    </ligand>
</feature>
<feature type="binding site" evidence="2">
    <location>
        <position position="231"/>
    </location>
    <ligand>
        <name>Ca(2+)</name>
        <dbReference type="ChEBI" id="CHEBI:29108"/>
        <label>2</label>
    </ligand>
</feature>
<feature type="binding site" evidence="2">
    <location>
        <position position="301"/>
    </location>
    <ligand>
        <name>Ca(2+)</name>
        <dbReference type="ChEBI" id="CHEBI:29108"/>
        <label>2</label>
    </ligand>
</feature>
<feature type="glycosylation site" description="N-linked (GlcNAc...) asparagine; by host" evidence="1">
    <location>
        <position position="69"/>
    </location>
</feature>
<feature type="glycosylation site" description="N-linked (GlcNAc...) asparagine; by host" evidence="1">
    <location>
        <position position="238"/>
    </location>
</feature>
<feature type="disulfide bond" evidence="2">
    <location>
        <begin position="82"/>
        <end position="135"/>
    </location>
</feature>
<feature type="disulfide bond" evidence="2">
    <location>
        <begin position="165"/>
        <end position="249"/>
    </location>
</feature>
<feature type="disulfide bond" evidence="2">
    <location>
        <begin position="191"/>
        <end position="244"/>
    </location>
</feature>
<feature type="disulfide bond" evidence="2">
    <location>
        <begin position="196"/>
        <end position="207"/>
    </location>
</feature>
<feature type="splice variant" id="VSP_038628" description="In isoform 2." evidence="3">
    <location>
        <begin position="1"/>
        <end position="29"/>
    </location>
</feature>
<feature type="sequence conflict" description="In Ref. 3; ABV53248." evidence="3" ref="3">
    <original>Y</original>
    <variation>H</variation>
    <location>
        <position position="302"/>
    </location>
</feature>
<organismHost>
    <name type="scientific">Homo sapiens</name>
    <name type="common">Human</name>
    <dbReference type="NCBI Taxonomy" id="9606"/>
</organismHost>
<name>VP7_ROTAD</name>
<organism>
    <name type="scientific">Rotavirus A (strain RVA/Human/United States/D/1974/G1P1A[8])</name>
    <name type="common">RV-A</name>
    <dbReference type="NCBI Taxonomy" id="578831"/>
    <lineage>
        <taxon>Viruses</taxon>
        <taxon>Riboviria</taxon>
        <taxon>Orthornavirae</taxon>
        <taxon>Duplornaviricota</taxon>
        <taxon>Resentoviricetes</taxon>
        <taxon>Reovirales</taxon>
        <taxon>Sedoreoviridae</taxon>
        <taxon>Rotavirus</taxon>
        <taxon>Rotavirus A</taxon>
    </lineage>
</organism>
<dbReference type="EMBL" id="AB118022">
    <property type="protein sequence ID" value="BAC82355.1"/>
    <property type="molecule type" value="Genomic_RNA"/>
</dbReference>
<dbReference type="EMBL" id="EF672574">
    <property type="protein sequence ID" value="ABV53248.1"/>
    <property type="molecule type" value="Genomic_RNA"/>
</dbReference>
<dbReference type="PIR" id="A27620">
    <property type="entry name" value="VGXRMD"/>
</dbReference>
<dbReference type="SMR" id="P11853"/>
<dbReference type="Proteomes" id="UP000006368">
    <property type="component" value="Genome"/>
</dbReference>
<dbReference type="GO" id="GO:0044166">
    <property type="term" value="C:host cell endoplasmic reticulum lumen"/>
    <property type="evidence" value="ECO:0007669"/>
    <property type="project" value="UniProtKB-SubCell"/>
</dbReference>
<dbReference type="GO" id="GO:0039621">
    <property type="term" value="C:T=13 icosahedral viral capsid"/>
    <property type="evidence" value="ECO:0007669"/>
    <property type="project" value="UniProtKB-UniRule"/>
</dbReference>
<dbReference type="GO" id="GO:0039624">
    <property type="term" value="C:viral outer capsid"/>
    <property type="evidence" value="ECO:0007669"/>
    <property type="project" value="UniProtKB-UniRule"/>
</dbReference>
<dbReference type="GO" id="GO:0046872">
    <property type="term" value="F:metal ion binding"/>
    <property type="evidence" value="ECO:0007669"/>
    <property type="project" value="UniProtKB-KW"/>
</dbReference>
<dbReference type="Gene3D" id="3.40.50.11130">
    <property type="entry name" value="Glycoprotein VP7, domain 1"/>
    <property type="match status" value="1"/>
</dbReference>
<dbReference type="Gene3D" id="2.60.120.800">
    <property type="entry name" value="Rotavirus outer-layer protein VP7, domain 2"/>
    <property type="match status" value="1"/>
</dbReference>
<dbReference type="HAMAP" id="MF_04130">
    <property type="entry name" value="Rota_VP7"/>
    <property type="match status" value="1"/>
</dbReference>
<dbReference type="HAMAP" id="MF_04131">
    <property type="entry name" value="Rota_VP7_A"/>
    <property type="match status" value="1"/>
</dbReference>
<dbReference type="InterPro" id="IPR001963">
    <property type="entry name" value="VP7"/>
</dbReference>
<dbReference type="InterPro" id="IPR042207">
    <property type="entry name" value="VP7_1"/>
</dbReference>
<dbReference type="InterPro" id="IPR042210">
    <property type="entry name" value="VP7_2"/>
</dbReference>
<dbReference type="Pfam" id="PF00434">
    <property type="entry name" value="VP7"/>
    <property type="match status" value="1"/>
</dbReference>
<proteinExistence type="inferred from homology"/>
<protein>
    <recommendedName>
        <fullName evidence="2">Outer capsid glycoprotein VP7</fullName>
    </recommendedName>
</protein>
<sequence>MYGIEYTTILIFLISIILLNYILKSVTRIMDYIIYRFLLITVALFALTRAQNYGLNLPITGSMDAVYTNSTQEEVFLTSTLCLYYPTEASTQINDGDWKDSLSQMFLTKGWPTGSVYFKEYSSIVDFSVDPQLYCDYNLVLMKYDQSLELDMSELADLILNEWLCNPMDVTLYYYQQSGESNKWISMGSSCTVKVCPLNTQTLGIGCQTTNVDSFEMIAENEKLAIVDVVDGINHKINLTTTTCTIRNCKKLGPRENVAVIQVGGSNVLDITADPTTNPQTERMMRVNWKKWWQVFYTIVDYINQIVQVMSKRSRSLNSAAFYYRV</sequence>